<evidence type="ECO:0000255" key="1">
    <source>
        <dbReference type="HAMAP-Rule" id="MF_01621"/>
    </source>
</evidence>
<protein>
    <recommendedName>
        <fullName evidence="1">Fatty acid oxidation complex subunit alpha</fullName>
    </recommendedName>
    <domain>
        <recommendedName>
            <fullName evidence="1">Enoyl-CoA hydratase/Delta(3)-cis-Delta(2)-trans-enoyl-CoA isomerase/3-hydroxybutyryl-CoA epimerase</fullName>
            <ecNumber evidence="1">4.2.1.17</ecNumber>
            <ecNumber evidence="1">5.1.2.3</ecNumber>
            <ecNumber evidence="1">5.3.3.8</ecNumber>
        </recommendedName>
    </domain>
    <domain>
        <recommendedName>
            <fullName evidence="1">3-hydroxyacyl-CoA dehydrogenase</fullName>
            <ecNumber evidence="1">1.1.1.35</ecNumber>
        </recommendedName>
    </domain>
</protein>
<accession>Q1CN99</accession>
<accession>D1Q191</accession>
<dbReference type="EC" id="4.2.1.17" evidence="1"/>
<dbReference type="EC" id="5.1.2.3" evidence="1"/>
<dbReference type="EC" id="5.3.3.8" evidence="1"/>
<dbReference type="EC" id="1.1.1.35" evidence="1"/>
<dbReference type="EMBL" id="CP000305">
    <property type="protein sequence ID" value="ABG16531.1"/>
    <property type="molecule type" value="Genomic_DNA"/>
</dbReference>
<dbReference type="EMBL" id="ACNQ01000001">
    <property type="protein sequence ID" value="EEO78645.1"/>
    <property type="molecule type" value="Genomic_DNA"/>
</dbReference>
<dbReference type="RefSeq" id="WP_002211546.1">
    <property type="nucleotide sequence ID" value="NZ_ACNQ01000001.1"/>
</dbReference>
<dbReference type="SMR" id="Q1CN99"/>
<dbReference type="GeneID" id="57974942"/>
<dbReference type="KEGG" id="ypn:YPN_0198"/>
<dbReference type="HOGENOM" id="CLU_009834_16_3_6"/>
<dbReference type="UniPathway" id="UPA00659"/>
<dbReference type="Proteomes" id="UP000008936">
    <property type="component" value="Chromosome"/>
</dbReference>
<dbReference type="GO" id="GO:0036125">
    <property type="term" value="C:fatty acid beta-oxidation multienzyme complex"/>
    <property type="evidence" value="ECO:0007669"/>
    <property type="project" value="InterPro"/>
</dbReference>
<dbReference type="GO" id="GO:0008692">
    <property type="term" value="F:3-hydroxybutyryl-CoA epimerase activity"/>
    <property type="evidence" value="ECO:0007669"/>
    <property type="project" value="UniProtKB-UniRule"/>
</dbReference>
<dbReference type="GO" id="GO:0004165">
    <property type="term" value="F:delta(3)-delta(2)-enoyl-CoA isomerase activity"/>
    <property type="evidence" value="ECO:0007669"/>
    <property type="project" value="UniProtKB-UniRule"/>
</dbReference>
<dbReference type="GO" id="GO:0004300">
    <property type="term" value="F:enoyl-CoA hydratase activity"/>
    <property type="evidence" value="ECO:0007669"/>
    <property type="project" value="UniProtKB-UniRule"/>
</dbReference>
<dbReference type="GO" id="GO:0016509">
    <property type="term" value="F:long-chain-3-hydroxyacyl-CoA dehydrogenase activity"/>
    <property type="evidence" value="ECO:0007669"/>
    <property type="project" value="TreeGrafter"/>
</dbReference>
<dbReference type="GO" id="GO:0070403">
    <property type="term" value="F:NAD+ binding"/>
    <property type="evidence" value="ECO:0007669"/>
    <property type="project" value="InterPro"/>
</dbReference>
<dbReference type="GO" id="GO:0006635">
    <property type="term" value="P:fatty acid beta-oxidation"/>
    <property type="evidence" value="ECO:0007669"/>
    <property type="project" value="UniProtKB-UniRule"/>
</dbReference>
<dbReference type="CDD" id="cd06558">
    <property type="entry name" value="crotonase-like"/>
    <property type="match status" value="1"/>
</dbReference>
<dbReference type="FunFam" id="1.10.1040.50:FF:000001">
    <property type="entry name" value="Fatty acid oxidation complex subunit alpha"/>
    <property type="match status" value="1"/>
</dbReference>
<dbReference type="FunFam" id="3.90.226.10:FF:000018">
    <property type="entry name" value="Fatty acid oxidation complex subunit alpha"/>
    <property type="match status" value="1"/>
</dbReference>
<dbReference type="FunFam" id="3.40.50.720:FF:000009">
    <property type="entry name" value="Fatty oxidation complex, alpha subunit"/>
    <property type="match status" value="1"/>
</dbReference>
<dbReference type="Gene3D" id="1.10.1040.50">
    <property type="match status" value="1"/>
</dbReference>
<dbReference type="Gene3D" id="3.90.226.10">
    <property type="entry name" value="2-enoyl-CoA Hydratase, Chain A, domain 1"/>
    <property type="match status" value="1"/>
</dbReference>
<dbReference type="Gene3D" id="3.40.50.720">
    <property type="entry name" value="NAD(P)-binding Rossmann-like Domain"/>
    <property type="match status" value="1"/>
</dbReference>
<dbReference type="HAMAP" id="MF_01621">
    <property type="entry name" value="FadB"/>
    <property type="match status" value="1"/>
</dbReference>
<dbReference type="InterPro" id="IPR006180">
    <property type="entry name" value="3-OHacyl-CoA_DH_CS"/>
</dbReference>
<dbReference type="InterPro" id="IPR006176">
    <property type="entry name" value="3-OHacyl-CoA_DH_NAD-bd"/>
</dbReference>
<dbReference type="InterPro" id="IPR006108">
    <property type="entry name" value="3HC_DH_C"/>
</dbReference>
<dbReference type="InterPro" id="IPR008927">
    <property type="entry name" value="6-PGluconate_DH-like_C_sf"/>
</dbReference>
<dbReference type="InterPro" id="IPR029045">
    <property type="entry name" value="ClpP/crotonase-like_dom_sf"/>
</dbReference>
<dbReference type="InterPro" id="IPR018376">
    <property type="entry name" value="Enoyl-CoA_hyd/isom_CS"/>
</dbReference>
<dbReference type="InterPro" id="IPR001753">
    <property type="entry name" value="Enoyl-CoA_hydra/iso"/>
</dbReference>
<dbReference type="InterPro" id="IPR050136">
    <property type="entry name" value="FA_oxidation_alpha_subunit"/>
</dbReference>
<dbReference type="InterPro" id="IPR012799">
    <property type="entry name" value="FadB"/>
</dbReference>
<dbReference type="InterPro" id="IPR036291">
    <property type="entry name" value="NAD(P)-bd_dom_sf"/>
</dbReference>
<dbReference type="NCBIfam" id="TIGR02437">
    <property type="entry name" value="FadB"/>
    <property type="match status" value="1"/>
</dbReference>
<dbReference type="NCBIfam" id="NF008727">
    <property type="entry name" value="PRK11730.1"/>
    <property type="match status" value="1"/>
</dbReference>
<dbReference type="PANTHER" id="PTHR43612">
    <property type="entry name" value="TRIFUNCTIONAL ENZYME SUBUNIT ALPHA"/>
    <property type="match status" value="1"/>
</dbReference>
<dbReference type="PANTHER" id="PTHR43612:SF3">
    <property type="entry name" value="TRIFUNCTIONAL ENZYME SUBUNIT ALPHA, MITOCHONDRIAL"/>
    <property type="match status" value="1"/>
</dbReference>
<dbReference type="Pfam" id="PF00725">
    <property type="entry name" value="3HCDH"/>
    <property type="match status" value="1"/>
</dbReference>
<dbReference type="Pfam" id="PF02737">
    <property type="entry name" value="3HCDH_N"/>
    <property type="match status" value="1"/>
</dbReference>
<dbReference type="Pfam" id="PF00378">
    <property type="entry name" value="ECH_1"/>
    <property type="match status" value="1"/>
</dbReference>
<dbReference type="SUPFAM" id="SSF48179">
    <property type="entry name" value="6-phosphogluconate dehydrogenase C-terminal domain-like"/>
    <property type="match status" value="2"/>
</dbReference>
<dbReference type="SUPFAM" id="SSF52096">
    <property type="entry name" value="ClpP/crotonase"/>
    <property type="match status" value="1"/>
</dbReference>
<dbReference type="SUPFAM" id="SSF51735">
    <property type="entry name" value="NAD(P)-binding Rossmann-fold domains"/>
    <property type="match status" value="1"/>
</dbReference>
<dbReference type="PROSITE" id="PS00067">
    <property type="entry name" value="3HCDH"/>
    <property type="match status" value="1"/>
</dbReference>
<dbReference type="PROSITE" id="PS00166">
    <property type="entry name" value="ENOYL_COA_HYDRATASE"/>
    <property type="match status" value="1"/>
</dbReference>
<feature type="chain" id="PRO_0000255848" description="Fatty acid oxidation complex subunit alpha">
    <location>
        <begin position="1"/>
        <end position="729"/>
    </location>
</feature>
<feature type="region of interest" description="Enoyl-CoA hydratase/isomerase" evidence="1">
    <location>
        <begin position="1"/>
        <end position="189"/>
    </location>
</feature>
<feature type="region of interest" description="3-hydroxyacyl-CoA dehydrogenase" evidence="1">
    <location>
        <begin position="311"/>
        <end position="729"/>
    </location>
</feature>
<feature type="active site" description="For 3-hydroxyacyl-CoA dehydrogenase activity" evidence="1">
    <location>
        <position position="450"/>
    </location>
</feature>
<feature type="binding site" evidence="1">
    <location>
        <position position="296"/>
    </location>
    <ligand>
        <name>substrate</name>
    </ligand>
</feature>
<feature type="binding site" evidence="1">
    <location>
        <position position="324"/>
    </location>
    <ligand>
        <name>NAD(+)</name>
        <dbReference type="ChEBI" id="CHEBI:57540"/>
    </ligand>
</feature>
<feature type="binding site" evidence="1">
    <location>
        <position position="343"/>
    </location>
    <ligand>
        <name>NAD(+)</name>
        <dbReference type="ChEBI" id="CHEBI:57540"/>
    </ligand>
</feature>
<feature type="binding site" evidence="1">
    <location>
        <begin position="400"/>
        <end position="402"/>
    </location>
    <ligand>
        <name>NAD(+)</name>
        <dbReference type="ChEBI" id="CHEBI:57540"/>
    </ligand>
</feature>
<feature type="binding site" evidence="1">
    <location>
        <position position="407"/>
    </location>
    <ligand>
        <name>NAD(+)</name>
        <dbReference type="ChEBI" id="CHEBI:57540"/>
    </ligand>
</feature>
<feature type="binding site" evidence="1">
    <location>
        <position position="429"/>
    </location>
    <ligand>
        <name>NAD(+)</name>
        <dbReference type="ChEBI" id="CHEBI:57540"/>
    </ligand>
</feature>
<feature type="binding site" evidence="1">
    <location>
        <position position="453"/>
    </location>
    <ligand>
        <name>NAD(+)</name>
        <dbReference type="ChEBI" id="CHEBI:57540"/>
    </ligand>
</feature>
<feature type="binding site" evidence="1">
    <location>
        <position position="500"/>
    </location>
    <ligand>
        <name>substrate</name>
    </ligand>
</feature>
<feature type="binding site" evidence="1">
    <location>
        <position position="660"/>
    </location>
    <ligand>
        <name>substrate</name>
    </ligand>
</feature>
<feature type="site" description="Important for catalytic activity" evidence="1">
    <location>
        <position position="119"/>
    </location>
</feature>
<feature type="site" description="Important for catalytic activity" evidence="1">
    <location>
        <position position="139"/>
    </location>
</feature>
<proteinExistence type="inferred from homology"/>
<comment type="function">
    <text evidence="1">Involved in the aerobic and anaerobic degradation of long-chain fatty acids via beta-oxidation cycle. Catalyzes the formation of 3-oxoacyl-CoA from enoyl-CoA via L-3-hydroxyacyl-CoA. It can also use D-3-hydroxyacyl-CoA and cis-3-enoyl-CoA as substrate.</text>
</comment>
<comment type="catalytic activity">
    <reaction evidence="1">
        <text>a (3S)-3-hydroxyacyl-CoA + NAD(+) = a 3-oxoacyl-CoA + NADH + H(+)</text>
        <dbReference type="Rhea" id="RHEA:22432"/>
        <dbReference type="ChEBI" id="CHEBI:15378"/>
        <dbReference type="ChEBI" id="CHEBI:57318"/>
        <dbReference type="ChEBI" id="CHEBI:57540"/>
        <dbReference type="ChEBI" id="CHEBI:57945"/>
        <dbReference type="ChEBI" id="CHEBI:90726"/>
        <dbReference type="EC" id="1.1.1.35"/>
    </reaction>
</comment>
<comment type="catalytic activity">
    <reaction evidence="1">
        <text>a (3S)-3-hydroxyacyl-CoA = a (2E)-enoyl-CoA + H2O</text>
        <dbReference type="Rhea" id="RHEA:16105"/>
        <dbReference type="ChEBI" id="CHEBI:15377"/>
        <dbReference type="ChEBI" id="CHEBI:57318"/>
        <dbReference type="ChEBI" id="CHEBI:58856"/>
        <dbReference type="EC" id="4.2.1.17"/>
    </reaction>
</comment>
<comment type="catalytic activity">
    <reaction evidence="1">
        <text>a 4-saturated-(3S)-3-hydroxyacyl-CoA = a (3E)-enoyl-CoA + H2O</text>
        <dbReference type="Rhea" id="RHEA:20724"/>
        <dbReference type="ChEBI" id="CHEBI:15377"/>
        <dbReference type="ChEBI" id="CHEBI:58521"/>
        <dbReference type="ChEBI" id="CHEBI:137480"/>
        <dbReference type="EC" id="4.2.1.17"/>
    </reaction>
</comment>
<comment type="catalytic activity">
    <reaction evidence="1">
        <text>(3S)-3-hydroxybutanoyl-CoA = (3R)-3-hydroxybutanoyl-CoA</text>
        <dbReference type="Rhea" id="RHEA:21760"/>
        <dbReference type="ChEBI" id="CHEBI:57315"/>
        <dbReference type="ChEBI" id="CHEBI:57316"/>
        <dbReference type="EC" id="5.1.2.3"/>
    </reaction>
</comment>
<comment type="catalytic activity">
    <reaction evidence="1">
        <text>a (3Z)-enoyl-CoA = a 4-saturated (2E)-enoyl-CoA</text>
        <dbReference type="Rhea" id="RHEA:45900"/>
        <dbReference type="ChEBI" id="CHEBI:85097"/>
        <dbReference type="ChEBI" id="CHEBI:85489"/>
        <dbReference type="EC" id="5.3.3.8"/>
    </reaction>
</comment>
<comment type="catalytic activity">
    <reaction evidence="1">
        <text>a (3E)-enoyl-CoA = a 4-saturated (2E)-enoyl-CoA</text>
        <dbReference type="Rhea" id="RHEA:45228"/>
        <dbReference type="ChEBI" id="CHEBI:58521"/>
        <dbReference type="ChEBI" id="CHEBI:85097"/>
        <dbReference type="EC" id="5.3.3.8"/>
    </reaction>
</comment>
<comment type="pathway">
    <text evidence="1">Lipid metabolism; fatty acid beta-oxidation.</text>
</comment>
<comment type="subunit">
    <text evidence="1">Heterotetramer of two alpha chains (FadB) and two beta chains (FadA).</text>
</comment>
<comment type="similarity">
    <text evidence="1">In the N-terminal section; belongs to the enoyl-CoA hydratase/isomerase family.</text>
</comment>
<comment type="similarity">
    <text evidence="1">In the C-terminal section; belongs to the 3-hydroxyacyl-CoA dehydrogenase family.</text>
</comment>
<reference key="1">
    <citation type="journal article" date="2006" name="J. Bacteriol.">
        <title>Complete genome sequence of Yersinia pestis strains Antiqua and Nepal516: evidence of gene reduction in an emerging pathogen.</title>
        <authorList>
            <person name="Chain P.S.G."/>
            <person name="Hu P."/>
            <person name="Malfatti S.A."/>
            <person name="Radnedge L."/>
            <person name="Larimer F."/>
            <person name="Vergez L.M."/>
            <person name="Worsham P."/>
            <person name="Chu M.C."/>
            <person name="Andersen G.L."/>
        </authorList>
    </citation>
    <scope>NUCLEOTIDE SEQUENCE [LARGE SCALE GENOMIC DNA]</scope>
    <source>
        <strain>Nepal516</strain>
    </source>
</reference>
<reference key="2">
    <citation type="submission" date="2009-04" db="EMBL/GenBank/DDBJ databases">
        <title>Yersinia pestis Nepal516A whole genome shotgun sequencing project.</title>
        <authorList>
            <person name="Plunkett G. III"/>
            <person name="Anderson B.D."/>
            <person name="Baumler D.J."/>
            <person name="Burland V."/>
            <person name="Cabot E.L."/>
            <person name="Glasner J.D."/>
            <person name="Mau B."/>
            <person name="Neeno-Eckwall E."/>
            <person name="Perna N.T."/>
            <person name="Munk A.C."/>
            <person name="Tapia R."/>
            <person name="Green L.D."/>
            <person name="Rogers Y.C."/>
            <person name="Detter J.C."/>
            <person name="Bruce D.C."/>
            <person name="Brettin T.S."/>
        </authorList>
    </citation>
    <scope>NUCLEOTIDE SEQUENCE [LARGE SCALE GENOMIC DNA]</scope>
    <source>
        <strain>Nepal516</strain>
    </source>
</reference>
<keyword id="KW-0276">Fatty acid metabolism</keyword>
<keyword id="KW-0413">Isomerase</keyword>
<keyword id="KW-0442">Lipid degradation</keyword>
<keyword id="KW-0443">Lipid metabolism</keyword>
<keyword id="KW-0456">Lyase</keyword>
<keyword id="KW-0511">Multifunctional enzyme</keyword>
<keyword id="KW-0520">NAD</keyword>
<keyword id="KW-0560">Oxidoreductase</keyword>
<name>FADB_YERPN</name>
<gene>
    <name evidence="1" type="primary">fadB</name>
    <name type="ordered locus">YPN_0198</name>
    <name type="ORF">YP516_0164</name>
</gene>
<organism>
    <name type="scientific">Yersinia pestis bv. Antiqua (strain Nepal516)</name>
    <dbReference type="NCBI Taxonomy" id="377628"/>
    <lineage>
        <taxon>Bacteria</taxon>
        <taxon>Pseudomonadati</taxon>
        <taxon>Pseudomonadota</taxon>
        <taxon>Gammaproteobacteria</taxon>
        <taxon>Enterobacterales</taxon>
        <taxon>Yersiniaceae</taxon>
        <taxon>Yersinia</taxon>
    </lineage>
</organism>
<sequence length="729" mass="78826">MLYQSETLQLHWLENGIAELVFDAPGSVNKLDTKTVANLGEALNVLEKQSELKGLLLRSAKTALIVGADITEFLSLFNAPPEKLHQWLVFANTIFNRLEDLPVPTISAINGYALGGGCECILATDFRIASPEARIGLPETKLGIMPGFGGSVRLPRLLGADSALEIIATGKDVTANDALKIGLVDAVVDPEKLVGSALTMLKQAIDGKLDWQAARRPKLEPLKLNPTEAAMCFTIAKGRVMQVAGKHYPAPLTAVKTIEAAAKFGRTEALNLETNSFVPLAGSNEARALVGIFLNDQYVKAQAKKLSKGVAAPKLAAVLGAGIMGGGIAYQSALKSVPVIMKDINENSLDLGMNEAAKLLNKQLERGKVDGLKMASILATIRPTLDYAGIERAQVIVEAVVENPKVKAAVLAEVEALIGEDTVLASNTSTIPIDQLAKSLKRPENFCGMHFFNPVHRMPLVEIIRGAKTSDKTLAAVVAYATQMGKTPIVVNDCPGFFVNRVLFPYLAGFGMLVRDGGDFHQIDKVMEKQFGWPMGPAYLLDVVGIDTAHHAQAVMAAGFPERMNKDYRDAVDVMFDNQRFGQKNGQGFYRYTQDAKGKPRKENDEQVDKLLAEISQPLQEFSDEDIIARTMIPMINEVVRCLEEGIIASAAEGDMALVYGLGFPPFHGGVFRYLDTLGSANYVEMAQRYAHLGALYHVPAGLRAKAEHNESYYPVAAALLDVSTNQPA</sequence>